<organism>
    <name type="scientific">Escherichia coli (strain K12 / MC4100 / BW2952)</name>
    <dbReference type="NCBI Taxonomy" id="595496"/>
    <lineage>
        <taxon>Bacteria</taxon>
        <taxon>Pseudomonadati</taxon>
        <taxon>Pseudomonadota</taxon>
        <taxon>Gammaproteobacteria</taxon>
        <taxon>Enterobacterales</taxon>
        <taxon>Enterobacteriaceae</taxon>
        <taxon>Escherichia</taxon>
    </lineage>
</organism>
<comment type="function">
    <text evidence="1">Involved in succinate export with YjjP. Both proteins are required for export.</text>
</comment>
<comment type="subunit">
    <text evidence="1">The transporter is composed of YjjB and YjjP.</text>
</comment>
<comment type="subcellular location">
    <subcellularLocation>
        <location evidence="1">Cell inner membrane</location>
        <topology evidence="1">Multi-pass membrane protein</topology>
    </subcellularLocation>
</comment>
<comment type="similarity">
    <text evidence="1">Belongs to the ThrE exporter (TC 2.A.79) family.</text>
</comment>
<sequence>MGVIEFLLALAQDMILAAIPAVGFAMVFNVPVRALRWCALLGSIGHGSRMILMTSGLNIEWSTFMASMLVGTIGIQWSRWYLAHPKVFTVAAVIPMFPGISAYTAMISAVKISQLGYSEPLMITLLTNFLTASSIVGALSIGLSIPGLWLYRKRPRV</sequence>
<protein>
    <recommendedName>
        <fullName evidence="1">Probable succinate transporter subunit YjjB</fullName>
    </recommendedName>
</protein>
<gene>
    <name evidence="1" type="primary">yjjB</name>
    <name type="ordered locus">BWG_4056</name>
</gene>
<keyword id="KW-0997">Cell inner membrane</keyword>
<keyword id="KW-1003">Cell membrane</keyword>
<keyword id="KW-0472">Membrane</keyword>
<keyword id="KW-0812">Transmembrane</keyword>
<keyword id="KW-1133">Transmembrane helix</keyword>
<keyword id="KW-0813">Transport</keyword>
<reference key="1">
    <citation type="journal article" date="2009" name="J. Bacteriol.">
        <title>Genomic sequencing reveals regulatory mutations and recombinational events in the widely used MC4100 lineage of Escherichia coli K-12.</title>
        <authorList>
            <person name="Ferenci T."/>
            <person name="Zhou Z."/>
            <person name="Betteridge T."/>
            <person name="Ren Y."/>
            <person name="Liu Y."/>
            <person name="Feng L."/>
            <person name="Reeves P.R."/>
            <person name="Wang L."/>
        </authorList>
    </citation>
    <scope>NUCLEOTIDE SEQUENCE [LARGE SCALE GENOMIC DNA]</scope>
    <source>
        <strain>K12 / MC4100 / BW2952</strain>
    </source>
</reference>
<name>YJJB_ECOBW</name>
<dbReference type="EMBL" id="CP001396">
    <property type="protein sequence ID" value="ACR62206.1"/>
    <property type="molecule type" value="Genomic_DNA"/>
</dbReference>
<dbReference type="RefSeq" id="WP_000538191.1">
    <property type="nucleotide sequence ID" value="NC_012759.1"/>
</dbReference>
<dbReference type="KEGG" id="ebw:BWG_4056"/>
<dbReference type="HOGENOM" id="CLU_117642_1_0_6"/>
<dbReference type="GO" id="GO:0005886">
    <property type="term" value="C:plasma membrane"/>
    <property type="evidence" value="ECO:0007669"/>
    <property type="project" value="UniProtKB-SubCell"/>
</dbReference>
<dbReference type="GO" id="GO:0015744">
    <property type="term" value="P:succinate transport"/>
    <property type="evidence" value="ECO:0007669"/>
    <property type="project" value="UniProtKB-UniRule"/>
</dbReference>
<dbReference type="HAMAP" id="MF_01191">
    <property type="entry name" value="YjjB"/>
    <property type="match status" value="1"/>
</dbReference>
<dbReference type="InterPro" id="IPR024528">
    <property type="entry name" value="ThrE_2"/>
</dbReference>
<dbReference type="InterPro" id="IPR050539">
    <property type="entry name" value="ThrE_Dicarb/AminoAcid_Exp"/>
</dbReference>
<dbReference type="InterPro" id="IPR020914">
    <property type="entry name" value="YjjB"/>
</dbReference>
<dbReference type="NCBIfam" id="NF007391">
    <property type="entry name" value="PRK09917.1"/>
    <property type="match status" value="1"/>
</dbReference>
<dbReference type="PANTHER" id="PTHR34390:SF1">
    <property type="entry name" value="SUCCINATE TRANSPORTER SUBUNIT YJJB-RELATED"/>
    <property type="match status" value="1"/>
</dbReference>
<dbReference type="PANTHER" id="PTHR34390">
    <property type="entry name" value="UPF0442 PROTEIN YJJB-RELATED"/>
    <property type="match status" value="1"/>
</dbReference>
<dbReference type="Pfam" id="PF12821">
    <property type="entry name" value="ThrE_2"/>
    <property type="match status" value="1"/>
</dbReference>
<accession>C4ZT46</accession>
<proteinExistence type="inferred from homology"/>
<evidence type="ECO:0000255" key="1">
    <source>
        <dbReference type="HAMAP-Rule" id="MF_01191"/>
    </source>
</evidence>
<feature type="chain" id="PRO_1000213793" description="Probable succinate transporter subunit YjjB">
    <location>
        <begin position="1"/>
        <end position="157"/>
    </location>
</feature>
<feature type="transmembrane region" description="Helical" evidence="1">
    <location>
        <begin position="8"/>
        <end position="28"/>
    </location>
</feature>
<feature type="transmembrane region" description="Helical" evidence="1">
    <location>
        <begin position="50"/>
        <end position="70"/>
    </location>
</feature>
<feature type="transmembrane region" description="Helical" evidence="1">
    <location>
        <begin position="87"/>
        <end position="107"/>
    </location>
</feature>
<feature type="transmembrane region" description="Helical" evidence="1">
    <location>
        <begin position="129"/>
        <end position="149"/>
    </location>
</feature>